<feature type="chain" id="PRO_0000318638" description="Type I iodothyronine deiodinase">
    <location>
        <begin position="1"/>
        <end position="249"/>
    </location>
</feature>
<feature type="topological domain" description="Extracellular" evidence="1">
    <location>
        <begin position="1"/>
        <end position="12"/>
    </location>
</feature>
<feature type="transmembrane region" description="Helical; Signal-anchor for type III membrane protein" evidence="5">
    <location>
        <begin position="13"/>
        <end position="33"/>
    </location>
</feature>
<feature type="topological domain" description="Cytoplasmic" evidence="1">
    <location>
        <begin position="34"/>
        <end position="249"/>
    </location>
</feature>
<feature type="active site" evidence="1">
    <location>
        <position position="126"/>
    </location>
</feature>
<feature type="non-standard amino acid" description="Selenocysteine" evidence="1">
    <location>
        <position position="126"/>
    </location>
</feature>
<protein>
    <recommendedName>
        <fullName>Type I iodothyronine deiodinase</fullName>
        <ecNumber evidence="3">1.21.99.3</ecNumber>
        <ecNumber evidence="7">1.21.99.4</ecNumber>
    </recommendedName>
    <alternativeName>
        <fullName>5DI</fullName>
    </alternativeName>
    <alternativeName>
        <fullName>DIOI</fullName>
    </alternativeName>
    <alternativeName>
        <fullName>Type 1 DI</fullName>
    </alternativeName>
    <alternativeName>
        <fullName>Type-I 5'-deiodinase</fullName>
    </alternativeName>
</protein>
<reference key="1">
    <citation type="journal article" date="2004" name="Endocrinology">
        <title>Characteristics and thyroid state-dependent regulation of iodothyronine deiodinases in pigs.</title>
        <authorList>
            <person name="Wassen F.W.J.S."/>
            <person name="Klootwijk W."/>
            <person name="Kaptein E."/>
            <person name="Duncker D.J."/>
            <person name="Visser T.J."/>
            <person name="Kuiper G.G.J.M."/>
        </authorList>
    </citation>
    <scope>NUCLEOTIDE SEQUENCE [MRNA]</scope>
    <scope>FUNCTION</scope>
    <scope>CATALYTIC ACTIVITY</scope>
    <scope>BIOPHYSICOCHEMICAL PROPERTIES</scope>
    <source>
        <strain>Landrace X Yorkshire</strain>
    </source>
</reference>
<sequence>MELPLPGLWLKRLWVLFQVALHVAMGKVLMTLFPGRVKQDILAMSQKTGMAKNPHFSHENWIPTFFSAQYFWFVLKVRWQRLEDKTEEGGLAPNCPVVSLSGQRCHIWDFMQGNRPLVLNFGSCTUPSFIFKFDQFKRLIEDFSSIADFLIIYIEEAHASDGWAFKNNVDIKNHQNLQDRLRAAHLLLDRSPQCPVVVDTMKNQSSRLYAALPERLYVLQAGRILYKGKPGPWNYHPEEVRAVLEKLHS</sequence>
<proteinExistence type="evidence at protein level"/>
<keyword id="KW-1003">Cell membrane</keyword>
<keyword id="KW-0256">Endoplasmic reticulum</keyword>
<keyword id="KW-0472">Membrane</keyword>
<keyword id="KW-0560">Oxidoreductase</keyword>
<keyword id="KW-1185">Reference proteome</keyword>
<keyword id="KW-0712">Selenocysteine</keyword>
<keyword id="KW-0893">Thyroid hormones biosynthesis</keyword>
<keyword id="KW-0812">Transmembrane</keyword>
<keyword id="KW-1133">Transmembrane helix</keyword>
<comment type="function">
    <text evidence="1 2 3 4 7">Plays a crucial role in the metabolism of thyroid hormones (TH) and has specific roles in TH activation and inactivation by deiodination (PubMed:15192045). Catalyzes the deiodination of L-thyroxine (T4) to 3,5,3'-triiodothyronine (T3) and 3,3',5'-triiodothyronine (rT3) to 3,3'-diiodothyronine (3,3'-T2) via outer-ring deiodination (ORD) (PubMed:15192045). Catalyzes the deiodination of T4 to rT3, T3 to 3,3'-T2, 3,5-diiodothyronine (3,5-T2) to 3-monoiodothyronine (3-T1) and 3,3'-T2 to 3-T1 via inner-ring deiodination (IRD) (By similarity). Catalyzes the deiodination of 3',5'-diiodothyronine (3',5'-T2) to 3'-monoiodothyronine (3'-T1) via ORD (By similarity). Catalyzes the phenolic ring deiodinations of 3,3',5'-triiodothyronamine, 3',5'-diiodothyronamine and 3,3'-diiodothyronamine as well as tyrosyl ring deiodinations of 3,5,3'-triiodothyronamine and 3,5-diiodothyronamine (By similarity). Catalyzes the deiodination of L-thyroxine sulfate and 3,3',5-triiodo-L-thyronine sulfate via IRD and of 3,3',5'-triiodo-L-thyronine sulfate via ORD (By similarity).</text>
</comment>
<comment type="catalytic activity">
    <reaction evidence="6 7">
        <text>3,3',5-triiodo-L-thyronine + iodide + A + H(+) = L-thyroxine + AH2</text>
        <dbReference type="Rhea" id="RHEA:19745"/>
        <dbReference type="ChEBI" id="CHEBI:13193"/>
        <dbReference type="ChEBI" id="CHEBI:15378"/>
        <dbReference type="ChEBI" id="CHEBI:16382"/>
        <dbReference type="ChEBI" id="CHEBI:17499"/>
        <dbReference type="ChEBI" id="CHEBI:58448"/>
        <dbReference type="ChEBI" id="CHEBI:533015"/>
        <dbReference type="EC" id="1.21.99.4"/>
    </reaction>
    <physiologicalReaction direction="right-to-left" evidence="9">
        <dbReference type="Rhea" id="RHEA:19747"/>
    </physiologicalReaction>
</comment>
<comment type="catalytic activity">
    <reaction evidence="3">
        <text>3,3',5'-triiodo-L-thyronine + iodide + A + H(+) = L-thyroxine + AH2</text>
        <dbReference type="Rhea" id="RHEA:18897"/>
        <dbReference type="ChEBI" id="CHEBI:13193"/>
        <dbReference type="ChEBI" id="CHEBI:15378"/>
        <dbReference type="ChEBI" id="CHEBI:16382"/>
        <dbReference type="ChEBI" id="CHEBI:17499"/>
        <dbReference type="ChEBI" id="CHEBI:57261"/>
        <dbReference type="ChEBI" id="CHEBI:58448"/>
        <dbReference type="EC" id="1.21.99.3"/>
    </reaction>
    <physiologicalReaction direction="right-to-left" evidence="3">
        <dbReference type="Rhea" id="RHEA:18899"/>
    </physiologicalReaction>
</comment>
<comment type="catalytic activity">
    <reaction evidence="7">
        <text>3,3'-diiodo-L-thyronine + iodide + A + H(+) = 3,3',5'-triiodo-L-thyronine + AH2</text>
        <dbReference type="Rhea" id="RHEA:82575"/>
        <dbReference type="ChEBI" id="CHEBI:13193"/>
        <dbReference type="ChEBI" id="CHEBI:15378"/>
        <dbReference type="ChEBI" id="CHEBI:16382"/>
        <dbReference type="ChEBI" id="CHEBI:17499"/>
        <dbReference type="ChEBI" id="CHEBI:57261"/>
        <dbReference type="ChEBI" id="CHEBI:176514"/>
    </reaction>
    <physiologicalReaction direction="right-to-left" evidence="9">
        <dbReference type="Rhea" id="RHEA:82577"/>
    </physiologicalReaction>
</comment>
<comment type="catalytic activity">
    <reaction evidence="3">
        <text>3,3'-diiodo-L-thyronine + iodide + A + H(+) = 3,3',5-triiodo-L-thyronine + AH2</text>
        <dbReference type="Rhea" id="RHEA:82571"/>
        <dbReference type="ChEBI" id="CHEBI:13193"/>
        <dbReference type="ChEBI" id="CHEBI:15378"/>
        <dbReference type="ChEBI" id="CHEBI:16382"/>
        <dbReference type="ChEBI" id="CHEBI:17499"/>
        <dbReference type="ChEBI" id="CHEBI:176514"/>
        <dbReference type="ChEBI" id="CHEBI:533015"/>
    </reaction>
    <physiologicalReaction direction="right-to-left" evidence="3">
        <dbReference type="Rhea" id="RHEA:82573"/>
    </physiologicalReaction>
</comment>
<comment type="catalytic activity">
    <reaction evidence="2">
        <text>3'-iodo-L-thyronine + iodide + A + H(+) = 3',5'-diiodo-L-thyronine + AH2</text>
        <dbReference type="Rhea" id="RHEA:82899"/>
        <dbReference type="ChEBI" id="CHEBI:13193"/>
        <dbReference type="ChEBI" id="CHEBI:15378"/>
        <dbReference type="ChEBI" id="CHEBI:16382"/>
        <dbReference type="ChEBI" id="CHEBI:17499"/>
        <dbReference type="ChEBI" id="CHEBI:195762"/>
        <dbReference type="ChEBI" id="CHEBI:232695"/>
    </reaction>
    <physiologicalReaction direction="right-to-left" evidence="2">
        <dbReference type="Rhea" id="RHEA:82901"/>
    </physiologicalReaction>
</comment>
<comment type="catalytic activity">
    <reaction evidence="4">
        <text>3-iodo-L-thyronine + iodide + A + H(+) = 3,5-diiodo-L-thyronine + AH2</text>
        <dbReference type="Rhea" id="RHEA:82895"/>
        <dbReference type="ChEBI" id="CHEBI:13193"/>
        <dbReference type="ChEBI" id="CHEBI:15378"/>
        <dbReference type="ChEBI" id="CHEBI:16382"/>
        <dbReference type="ChEBI" id="CHEBI:17499"/>
        <dbReference type="ChEBI" id="CHEBI:232626"/>
        <dbReference type="ChEBI" id="CHEBI:232627"/>
    </reaction>
    <physiologicalReaction direction="right-to-left" evidence="4">
        <dbReference type="Rhea" id="RHEA:82897"/>
    </physiologicalReaction>
</comment>
<comment type="catalytic activity">
    <reaction evidence="4">
        <text>3-iodo-L-thyronine + iodide + A + H(+) = 3,3'-diiodo-L-thyronine + AH2</text>
        <dbReference type="Rhea" id="RHEA:83783"/>
        <dbReference type="ChEBI" id="CHEBI:13193"/>
        <dbReference type="ChEBI" id="CHEBI:15378"/>
        <dbReference type="ChEBI" id="CHEBI:16382"/>
        <dbReference type="ChEBI" id="CHEBI:17499"/>
        <dbReference type="ChEBI" id="CHEBI:176514"/>
        <dbReference type="ChEBI" id="CHEBI:232627"/>
    </reaction>
    <physiologicalReaction direction="right-to-left" evidence="4">
        <dbReference type="Rhea" id="RHEA:83785"/>
    </physiologicalReaction>
</comment>
<comment type="catalytic activity">
    <reaction evidence="4">
        <text>3,3'-diiodothyronamine + iodide + A + H(+) = 3,3',5'-triiodothyronamine + AH2</text>
        <dbReference type="Rhea" id="RHEA:83795"/>
        <dbReference type="ChEBI" id="CHEBI:13193"/>
        <dbReference type="ChEBI" id="CHEBI:15378"/>
        <dbReference type="ChEBI" id="CHEBI:16382"/>
        <dbReference type="ChEBI" id="CHEBI:17499"/>
        <dbReference type="ChEBI" id="CHEBI:233341"/>
        <dbReference type="ChEBI" id="CHEBI:233343"/>
    </reaction>
    <physiologicalReaction direction="right-to-left" evidence="4">
        <dbReference type="Rhea" id="RHEA:83797"/>
    </physiologicalReaction>
</comment>
<comment type="catalytic activity">
    <reaction evidence="4">
        <text>3'-iodothyronamine + iodide + A + H(+) = 3',5'-diiodothyronamine + AH2</text>
        <dbReference type="Rhea" id="RHEA:83803"/>
        <dbReference type="ChEBI" id="CHEBI:13193"/>
        <dbReference type="ChEBI" id="CHEBI:15378"/>
        <dbReference type="ChEBI" id="CHEBI:16382"/>
        <dbReference type="ChEBI" id="CHEBI:17499"/>
        <dbReference type="ChEBI" id="CHEBI:233339"/>
        <dbReference type="ChEBI" id="CHEBI:233342"/>
    </reaction>
    <physiologicalReaction direction="right-to-left" evidence="4">
        <dbReference type="Rhea" id="RHEA:83805"/>
    </physiologicalReaction>
</comment>
<comment type="catalytic activity">
    <reaction evidence="4">
        <text>3-iodothyronamine + iodide + A + H(+) = 3,3'-diiodothyronamine + AH2</text>
        <dbReference type="Rhea" id="RHEA:83827"/>
        <dbReference type="ChEBI" id="CHEBI:13193"/>
        <dbReference type="ChEBI" id="CHEBI:15378"/>
        <dbReference type="ChEBI" id="CHEBI:16382"/>
        <dbReference type="ChEBI" id="CHEBI:17499"/>
        <dbReference type="ChEBI" id="CHEBI:231647"/>
        <dbReference type="ChEBI" id="CHEBI:233341"/>
    </reaction>
    <physiologicalReaction direction="right-to-left" evidence="4">
        <dbReference type="Rhea" id="RHEA:83829"/>
    </physiologicalReaction>
</comment>
<comment type="catalytic activity">
    <reaction evidence="4">
        <text>3,3'-diiodothyronamine + iodide + A + H(+) = 3,3',5-triiodothyronamine + AH2</text>
        <dbReference type="Rhea" id="RHEA:83811"/>
        <dbReference type="ChEBI" id="CHEBI:13193"/>
        <dbReference type="ChEBI" id="CHEBI:15378"/>
        <dbReference type="ChEBI" id="CHEBI:16382"/>
        <dbReference type="ChEBI" id="CHEBI:17499"/>
        <dbReference type="ChEBI" id="CHEBI:233341"/>
        <dbReference type="ChEBI" id="CHEBI:233426"/>
    </reaction>
    <physiologicalReaction direction="right-to-left" evidence="4">
        <dbReference type="Rhea" id="RHEA:83813"/>
    </physiologicalReaction>
</comment>
<comment type="catalytic activity">
    <reaction evidence="4">
        <text>3-iodothyronamine + iodide + A + H(+) = 3,5-diiodothyronamine + AH2</text>
        <dbReference type="Rhea" id="RHEA:83823"/>
        <dbReference type="ChEBI" id="CHEBI:13193"/>
        <dbReference type="ChEBI" id="CHEBI:15378"/>
        <dbReference type="ChEBI" id="CHEBI:16382"/>
        <dbReference type="ChEBI" id="CHEBI:17499"/>
        <dbReference type="ChEBI" id="CHEBI:231647"/>
        <dbReference type="ChEBI" id="CHEBI:233340"/>
    </reaction>
    <physiologicalReaction direction="right-to-left" evidence="4">
        <dbReference type="Rhea" id="RHEA:83825"/>
    </physiologicalReaction>
</comment>
<comment type="catalytic activity">
    <reaction evidence="1">
        <text>3,3'-diiodo-L-thyronine sulfate + iodide + A + H(+) = 3,3',5'-triiodo-L-thyronine sulfate + AH2</text>
        <dbReference type="Rhea" id="RHEA:83831"/>
        <dbReference type="ChEBI" id="CHEBI:13193"/>
        <dbReference type="ChEBI" id="CHEBI:15378"/>
        <dbReference type="ChEBI" id="CHEBI:16382"/>
        <dbReference type="ChEBI" id="CHEBI:17499"/>
        <dbReference type="ChEBI" id="CHEBI:176513"/>
        <dbReference type="ChEBI" id="CHEBI:176515"/>
    </reaction>
    <physiologicalReaction direction="right-to-left" evidence="1">
        <dbReference type="Rhea" id="RHEA:83833"/>
    </physiologicalReaction>
</comment>
<comment type="catalytic activity">
    <reaction evidence="1">
        <text>3,3',5'-triiodo-L-thyronine sulfate + iodide + A + H(+) = L-thyroxine sulfate + AH2</text>
        <dbReference type="Rhea" id="RHEA:83835"/>
        <dbReference type="ChEBI" id="CHEBI:13193"/>
        <dbReference type="ChEBI" id="CHEBI:15378"/>
        <dbReference type="ChEBI" id="CHEBI:16382"/>
        <dbReference type="ChEBI" id="CHEBI:17499"/>
        <dbReference type="ChEBI" id="CHEBI:176512"/>
        <dbReference type="ChEBI" id="CHEBI:176513"/>
    </reaction>
    <physiologicalReaction direction="right-to-left" evidence="1">
        <dbReference type="Rhea" id="RHEA:83837"/>
    </physiologicalReaction>
</comment>
<comment type="catalytic activity">
    <reaction evidence="1">
        <text>3,3'-diiodo-L-thyronine sulfate + iodide + A + H(+) = 3,3',5-triiodo-L-thyronine sulfate + AH2</text>
        <dbReference type="Rhea" id="RHEA:83751"/>
        <dbReference type="ChEBI" id="CHEBI:13193"/>
        <dbReference type="ChEBI" id="CHEBI:15378"/>
        <dbReference type="ChEBI" id="CHEBI:16382"/>
        <dbReference type="ChEBI" id="CHEBI:17499"/>
        <dbReference type="ChEBI" id="CHEBI:176511"/>
        <dbReference type="ChEBI" id="CHEBI:176515"/>
    </reaction>
    <physiologicalReaction direction="right-to-left" evidence="1">
        <dbReference type="Rhea" id="RHEA:83753"/>
    </physiologicalReaction>
</comment>
<comment type="biophysicochemical properties">
    <kinetics>
        <KM evidence="7">0.16 uM for 3,3',5'-triiodo-L-thyronine</KM>
    </kinetics>
</comment>
<comment type="subunit">
    <text evidence="2">Predominantly monomer. Can form homodimers but homodimerization is not essential for enzyme activity.</text>
</comment>
<comment type="subcellular location">
    <subcellularLocation>
        <location evidence="1">Cell membrane</location>
        <topology evidence="1">Single-pass type III membrane protein</topology>
    </subcellularLocation>
    <subcellularLocation>
        <location evidence="1">Endoplasmic reticulum membrane</location>
        <topology evidence="1">Single-pass type III membrane protein</topology>
    </subcellularLocation>
    <subcellularLocation>
        <location evidence="1">Basolateral cell membrane</location>
        <topology evidence="1">Single-pass type III membrane protein</topology>
    </subcellularLocation>
</comment>
<comment type="similarity">
    <text evidence="8">Belongs to the iodothyronine deiodinase family.</text>
</comment>
<dbReference type="EC" id="1.21.99.3" evidence="3"/>
<dbReference type="EC" id="1.21.99.4" evidence="7"/>
<dbReference type="EMBL" id="AY533206">
    <property type="protein sequence ID" value="AAS48447.1"/>
    <property type="molecule type" value="mRNA"/>
</dbReference>
<dbReference type="RefSeq" id="NP_001001627.1">
    <property type="nucleotide sequence ID" value="NM_001001627.1"/>
</dbReference>
<dbReference type="FunCoup" id="Q6QN13">
    <property type="interactions" value="92"/>
</dbReference>
<dbReference type="STRING" id="9823.ENSSSCP00000025038"/>
<dbReference type="PaxDb" id="9823-ENSSSCP00000025038"/>
<dbReference type="Ensembl" id="ENSSSCT00000026326.4">
    <property type="protein sequence ID" value="ENSSSCP00000025038.2"/>
    <property type="gene ID" value="ENSSSCG00000028896.4"/>
</dbReference>
<dbReference type="Ensembl" id="ENSSSCT00025013973.1">
    <property type="protein sequence ID" value="ENSSSCP00025005431.1"/>
    <property type="gene ID" value="ENSSSCG00025010634.1"/>
</dbReference>
<dbReference type="Ensembl" id="ENSSSCT00030094739.1">
    <property type="protein sequence ID" value="ENSSSCP00030043644.1"/>
    <property type="gene ID" value="ENSSSCG00030067761.1"/>
</dbReference>
<dbReference type="Ensembl" id="ENSSSCT00035068667.1">
    <property type="protein sequence ID" value="ENSSSCP00035027792.1"/>
    <property type="gene ID" value="ENSSSCG00035051563.1"/>
</dbReference>
<dbReference type="Ensembl" id="ENSSSCT00040034925.1">
    <property type="protein sequence ID" value="ENSSSCP00040014474.1"/>
    <property type="gene ID" value="ENSSSCG00040026128.1"/>
</dbReference>
<dbReference type="Ensembl" id="ENSSSCT00045039841.1">
    <property type="protein sequence ID" value="ENSSSCP00045027739.1"/>
    <property type="gene ID" value="ENSSSCG00045023320.1"/>
</dbReference>
<dbReference type="Ensembl" id="ENSSSCT00050035418.1">
    <property type="protein sequence ID" value="ENSSSCP00050014729.1"/>
    <property type="gene ID" value="ENSSSCG00050026315.1"/>
</dbReference>
<dbReference type="Ensembl" id="ENSSSCT00055054455.1">
    <property type="protein sequence ID" value="ENSSSCP00055043435.1"/>
    <property type="gene ID" value="ENSSSCG00055027536.1"/>
</dbReference>
<dbReference type="Ensembl" id="ENSSSCT00065107599.1">
    <property type="protein sequence ID" value="ENSSSCP00065047982.1"/>
    <property type="gene ID" value="ENSSSCG00065077758.1"/>
</dbReference>
<dbReference type="Ensembl" id="ENSSSCT00070060565.1">
    <property type="protein sequence ID" value="ENSSSCP00070051609.1"/>
    <property type="gene ID" value="ENSSSCG00070030119.1"/>
</dbReference>
<dbReference type="Ensembl" id="ENSSSCT00085015433">
    <property type="protein sequence ID" value="ENSSSCP00085011027"/>
    <property type="gene ID" value="ENSSSCG00085008158"/>
</dbReference>
<dbReference type="Ensembl" id="ENSSSCT00090052590">
    <property type="protein sequence ID" value="ENSSSCP00090032789"/>
    <property type="gene ID" value="ENSSSCG00090029685"/>
</dbReference>
<dbReference type="Ensembl" id="ENSSSCT00105073266">
    <property type="protein sequence ID" value="ENSSSCP00105052076"/>
    <property type="gene ID" value="ENSSSCG00105038277"/>
</dbReference>
<dbReference type="Ensembl" id="ENSSSCT00110009922">
    <property type="protein sequence ID" value="ENSSSCP00110006952"/>
    <property type="gene ID" value="ENSSSCG00110005090"/>
</dbReference>
<dbReference type="Ensembl" id="ENSSSCT00115027400">
    <property type="protein sequence ID" value="ENSSSCP00115025970"/>
    <property type="gene ID" value="ENSSSCG00115015682"/>
</dbReference>
<dbReference type="Ensembl" id="ENSSSCT00130034538">
    <property type="protein sequence ID" value="ENSSSCP00130023907"/>
    <property type="gene ID" value="ENSSSCG00130017676"/>
</dbReference>
<dbReference type="GeneID" id="414380"/>
<dbReference type="KEGG" id="ssc:414380"/>
<dbReference type="CTD" id="1733"/>
<dbReference type="VGNC" id="VGNC:87304">
    <property type="gene designation" value="DIO1"/>
</dbReference>
<dbReference type="eggNOG" id="ENOG502QUGZ">
    <property type="taxonomic scope" value="Eukaryota"/>
</dbReference>
<dbReference type="GeneTree" id="ENSGT00940000154482"/>
<dbReference type="HOGENOM" id="CLU_089345_2_0_1"/>
<dbReference type="InParanoid" id="Q6QN13"/>
<dbReference type="OMA" id="TFGSCTX"/>
<dbReference type="OrthoDB" id="428577at2759"/>
<dbReference type="Reactome" id="R-SSC-350864">
    <property type="pathway name" value="Regulation of thyroid hormone activity"/>
</dbReference>
<dbReference type="SABIO-RK" id="Q6QN13"/>
<dbReference type="Proteomes" id="UP000008227">
    <property type="component" value="Chromosome 6"/>
</dbReference>
<dbReference type="Proteomes" id="UP000314985">
    <property type="component" value="Chromosome 6"/>
</dbReference>
<dbReference type="Proteomes" id="UP000694570">
    <property type="component" value="Unplaced"/>
</dbReference>
<dbReference type="Proteomes" id="UP000694571">
    <property type="component" value="Unplaced"/>
</dbReference>
<dbReference type="Proteomes" id="UP000694720">
    <property type="component" value="Unplaced"/>
</dbReference>
<dbReference type="Proteomes" id="UP000694722">
    <property type="component" value="Unplaced"/>
</dbReference>
<dbReference type="Proteomes" id="UP000694723">
    <property type="component" value="Unplaced"/>
</dbReference>
<dbReference type="Proteomes" id="UP000694724">
    <property type="component" value="Unplaced"/>
</dbReference>
<dbReference type="Proteomes" id="UP000694725">
    <property type="component" value="Unplaced"/>
</dbReference>
<dbReference type="Proteomes" id="UP000694726">
    <property type="component" value="Unplaced"/>
</dbReference>
<dbReference type="Proteomes" id="UP000694727">
    <property type="component" value="Unplaced"/>
</dbReference>
<dbReference type="Proteomes" id="UP000694728">
    <property type="component" value="Unplaced"/>
</dbReference>
<dbReference type="Bgee" id="ENSSSCG00000028896">
    <property type="expression patterns" value="Expressed in adult mammalian kidney and 18 other cell types or tissues"/>
</dbReference>
<dbReference type="GO" id="GO:0016323">
    <property type="term" value="C:basolateral plasma membrane"/>
    <property type="evidence" value="ECO:0007669"/>
    <property type="project" value="UniProtKB-SubCell"/>
</dbReference>
<dbReference type="GO" id="GO:0005789">
    <property type="term" value="C:endoplasmic reticulum membrane"/>
    <property type="evidence" value="ECO:0007669"/>
    <property type="project" value="UniProtKB-SubCell"/>
</dbReference>
<dbReference type="GO" id="GO:0004800">
    <property type="term" value="F:thyroxine 5'-deiodinase activity"/>
    <property type="evidence" value="ECO:0000314"/>
    <property type="project" value="UniProtKB"/>
</dbReference>
<dbReference type="GO" id="GO:0033798">
    <property type="term" value="F:thyroxine 5-deiodinase activity"/>
    <property type="evidence" value="ECO:0000250"/>
    <property type="project" value="UniProtKB"/>
</dbReference>
<dbReference type="GO" id="GO:0006520">
    <property type="term" value="P:amino acid metabolic process"/>
    <property type="evidence" value="ECO:0007669"/>
    <property type="project" value="Ensembl"/>
</dbReference>
<dbReference type="GO" id="GO:0042446">
    <property type="term" value="P:hormone biosynthetic process"/>
    <property type="evidence" value="ECO:0007669"/>
    <property type="project" value="UniProtKB-KW"/>
</dbReference>
<dbReference type="GO" id="GO:0042404">
    <property type="term" value="P:thyroid hormone catabolic process"/>
    <property type="evidence" value="ECO:0000314"/>
    <property type="project" value="UniProtKB"/>
</dbReference>
<dbReference type="GO" id="GO:0042403">
    <property type="term" value="P:thyroid hormone metabolic process"/>
    <property type="evidence" value="ECO:0000318"/>
    <property type="project" value="GO_Central"/>
</dbReference>
<dbReference type="FunFam" id="3.40.30.10:FF:000192">
    <property type="entry name" value="Iodothyronine deiodinase"/>
    <property type="match status" value="1"/>
</dbReference>
<dbReference type="Gene3D" id="3.40.30.10">
    <property type="entry name" value="Glutaredoxin"/>
    <property type="match status" value="1"/>
</dbReference>
<dbReference type="InterPro" id="IPR000643">
    <property type="entry name" value="Iodothyronine_deiodinase"/>
</dbReference>
<dbReference type="InterPro" id="IPR008261">
    <property type="entry name" value="Iodothyronine_deiodinase_AS"/>
</dbReference>
<dbReference type="InterPro" id="IPR027252">
    <property type="entry name" value="Iodothyronine_deiodinase_I/III"/>
</dbReference>
<dbReference type="InterPro" id="IPR036249">
    <property type="entry name" value="Thioredoxin-like_sf"/>
</dbReference>
<dbReference type="PANTHER" id="PTHR11781">
    <property type="entry name" value="IODOTHYRONINE DEIODINASE"/>
    <property type="match status" value="1"/>
</dbReference>
<dbReference type="PANTHER" id="PTHR11781:SF22">
    <property type="entry name" value="TYPE I IODOTHYRONINE DEIODINASE"/>
    <property type="match status" value="1"/>
</dbReference>
<dbReference type="Pfam" id="PF00837">
    <property type="entry name" value="T4_deiodinase"/>
    <property type="match status" value="1"/>
</dbReference>
<dbReference type="PIRSF" id="PIRSF001330">
    <property type="entry name" value="IOD"/>
    <property type="match status" value="1"/>
</dbReference>
<dbReference type="PIRSF" id="PIRSF500144">
    <property type="entry name" value="IODI_III"/>
    <property type="match status" value="1"/>
</dbReference>
<dbReference type="SUPFAM" id="SSF52833">
    <property type="entry name" value="Thioredoxin-like"/>
    <property type="match status" value="1"/>
</dbReference>
<dbReference type="PROSITE" id="PS01205">
    <property type="entry name" value="T4_DEIODINASE"/>
    <property type="match status" value="1"/>
</dbReference>
<name>IOD1_PIG</name>
<evidence type="ECO:0000250" key="1">
    <source>
        <dbReference type="UniProtKB" id="P24389"/>
    </source>
</evidence>
<evidence type="ECO:0000250" key="2">
    <source>
        <dbReference type="UniProtKB" id="P49895"/>
    </source>
</evidence>
<evidence type="ECO:0000250" key="3">
    <source>
        <dbReference type="UniProtKB" id="Q2QEI3"/>
    </source>
</evidence>
<evidence type="ECO:0000250" key="4">
    <source>
        <dbReference type="UniProtKB" id="Q61153"/>
    </source>
</evidence>
<evidence type="ECO:0000255" key="5"/>
<evidence type="ECO:0000255" key="6">
    <source>
        <dbReference type="PROSITE-ProRule" id="PRU10107"/>
    </source>
</evidence>
<evidence type="ECO:0000269" key="7">
    <source>
    </source>
</evidence>
<evidence type="ECO:0000305" key="8"/>
<evidence type="ECO:0000305" key="9">
    <source>
    </source>
</evidence>
<accession>Q6QN13</accession>
<gene>
    <name type="primary">DIO1</name>
</gene>
<organism>
    <name type="scientific">Sus scrofa</name>
    <name type="common">Pig</name>
    <dbReference type="NCBI Taxonomy" id="9823"/>
    <lineage>
        <taxon>Eukaryota</taxon>
        <taxon>Metazoa</taxon>
        <taxon>Chordata</taxon>
        <taxon>Craniata</taxon>
        <taxon>Vertebrata</taxon>
        <taxon>Euteleostomi</taxon>
        <taxon>Mammalia</taxon>
        <taxon>Eutheria</taxon>
        <taxon>Laurasiatheria</taxon>
        <taxon>Artiodactyla</taxon>
        <taxon>Suina</taxon>
        <taxon>Suidae</taxon>
        <taxon>Sus</taxon>
    </lineage>
</organism>